<sequence length="386" mass="41635">MNIHEYQGKAVLRSYGVSVPNGKVAFTVEEAVEAAKELGTDVCVVKAQIHAGGRGKAGGVKVAKNLDEVRTYAESILGTTLVTHQTGPEGKEVKRLLIEEGCDIKKEYYVGLVLDRATSQVVLMASEEGGTEIEEVAEKTPEKIFKEYIDPAVGLQGFQARRIAFNINIPKELVGQAVKFMMGLYRAFIEKDCSIAEINPLVTTGDGKVMALDAKLNFDSNALYRHKDILELRDLDEEDAKEIEASKYDLNYIPLDGNIGCMVNGAGLAMATMDIIKHYHGDPANFLDVGGGATAEKVTEAFKIILSDKNVKGIFVNIFGGIMKCDVIAEGVIEATKQVGLELPLVVRLEGTNVELGKKILNESGLNIVAAESMADGAQKIVSLVG</sequence>
<comment type="function">
    <text evidence="1">Succinyl-CoA synthetase functions in the citric acid cycle (TCA), coupling the hydrolysis of succinyl-CoA to the synthesis of either ATP or GTP and thus represents the only step of substrate-level phosphorylation in the TCA. The beta subunit provides nucleotide specificity of the enzyme and binds the substrate succinate, while the binding sites for coenzyme A and phosphate are found in the alpha subunit.</text>
</comment>
<comment type="catalytic activity">
    <reaction evidence="1">
        <text>succinate + ATP + CoA = succinyl-CoA + ADP + phosphate</text>
        <dbReference type="Rhea" id="RHEA:17661"/>
        <dbReference type="ChEBI" id="CHEBI:30031"/>
        <dbReference type="ChEBI" id="CHEBI:30616"/>
        <dbReference type="ChEBI" id="CHEBI:43474"/>
        <dbReference type="ChEBI" id="CHEBI:57287"/>
        <dbReference type="ChEBI" id="CHEBI:57292"/>
        <dbReference type="ChEBI" id="CHEBI:456216"/>
        <dbReference type="EC" id="6.2.1.5"/>
    </reaction>
    <physiologicalReaction direction="right-to-left" evidence="1">
        <dbReference type="Rhea" id="RHEA:17663"/>
    </physiologicalReaction>
</comment>
<comment type="catalytic activity">
    <reaction evidence="1">
        <text>GTP + succinate + CoA = succinyl-CoA + GDP + phosphate</text>
        <dbReference type="Rhea" id="RHEA:22120"/>
        <dbReference type="ChEBI" id="CHEBI:30031"/>
        <dbReference type="ChEBI" id="CHEBI:37565"/>
        <dbReference type="ChEBI" id="CHEBI:43474"/>
        <dbReference type="ChEBI" id="CHEBI:57287"/>
        <dbReference type="ChEBI" id="CHEBI:57292"/>
        <dbReference type="ChEBI" id="CHEBI:58189"/>
    </reaction>
    <physiologicalReaction direction="right-to-left" evidence="1">
        <dbReference type="Rhea" id="RHEA:22122"/>
    </physiologicalReaction>
</comment>
<comment type="cofactor">
    <cofactor evidence="1">
        <name>Mg(2+)</name>
        <dbReference type="ChEBI" id="CHEBI:18420"/>
    </cofactor>
    <text evidence="1">Binds 1 Mg(2+) ion per subunit.</text>
</comment>
<comment type="pathway">
    <text evidence="1">Carbohydrate metabolism; tricarboxylic acid cycle; succinate from succinyl-CoA (ligase route): step 1/1.</text>
</comment>
<comment type="subunit">
    <text evidence="1">Heterotetramer of two alpha and two beta subunits.</text>
</comment>
<comment type="similarity">
    <text evidence="1">Belongs to the succinate/malate CoA ligase beta subunit family.</text>
</comment>
<dbReference type="EC" id="6.2.1.5" evidence="1"/>
<dbReference type="EMBL" id="AE017194">
    <property type="protein sequence ID" value="AAS42783.1"/>
    <property type="molecule type" value="Genomic_DNA"/>
</dbReference>
<dbReference type="SMR" id="Q732N4"/>
<dbReference type="KEGG" id="bca:BCE_3878"/>
<dbReference type="HOGENOM" id="CLU_037430_0_2_9"/>
<dbReference type="UniPathway" id="UPA00223">
    <property type="reaction ID" value="UER00999"/>
</dbReference>
<dbReference type="Proteomes" id="UP000002527">
    <property type="component" value="Chromosome"/>
</dbReference>
<dbReference type="GO" id="GO:0005829">
    <property type="term" value="C:cytosol"/>
    <property type="evidence" value="ECO:0007669"/>
    <property type="project" value="TreeGrafter"/>
</dbReference>
<dbReference type="GO" id="GO:0042709">
    <property type="term" value="C:succinate-CoA ligase complex"/>
    <property type="evidence" value="ECO:0007669"/>
    <property type="project" value="TreeGrafter"/>
</dbReference>
<dbReference type="GO" id="GO:0005524">
    <property type="term" value="F:ATP binding"/>
    <property type="evidence" value="ECO:0007669"/>
    <property type="project" value="UniProtKB-UniRule"/>
</dbReference>
<dbReference type="GO" id="GO:0000287">
    <property type="term" value="F:magnesium ion binding"/>
    <property type="evidence" value="ECO:0007669"/>
    <property type="project" value="UniProtKB-UniRule"/>
</dbReference>
<dbReference type="GO" id="GO:0004775">
    <property type="term" value="F:succinate-CoA ligase (ADP-forming) activity"/>
    <property type="evidence" value="ECO:0007669"/>
    <property type="project" value="UniProtKB-UniRule"/>
</dbReference>
<dbReference type="GO" id="GO:0004776">
    <property type="term" value="F:succinate-CoA ligase (GDP-forming) activity"/>
    <property type="evidence" value="ECO:0007669"/>
    <property type="project" value="RHEA"/>
</dbReference>
<dbReference type="GO" id="GO:0006104">
    <property type="term" value="P:succinyl-CoA metabolic process"/>
    <property type="evidence" value="ECO:0007669"/>
    <property type="project" value="TreeGrafter"/>
</dbReference>
<dbReference type="GO" id="GO:0006099">
    <property type="term" value="P:tricarboxylic acid cycle"/>
    <property type="evidence" value="ECO:0007669"/>
    <property type="project" value="UniProtKB-UniRule"/>
</dbReference>
<dbReference type="FunFam" id="3.30.1490.20:FF:000002">
    <property type="entry name" value="Succinate--CoA ligase [ADP-forming] subunit beta"/>
    <property type="match status" value="1"/>
</dbReference>
<dbReference type="FunFam" id="3.30.470.20:FF:000002">
    <property type="entry name" value="Succinate--CoA ligase [ADP-forming] subunit beta"/>
    <property type="match status" value="1"/>
</dbReference>
<dbReference type="FunFam" id="3.40.50.261:FF:000001">
    <property type="entry name" value="Succinate--CoA ligase [ADP-forming] subunit beta"/>
    <property type="match status" value="1"/>
</dbReference>
<dbReference type="Gene3D" id="3.30.1490.20">
    <property type="entry name" value="ATP-grasp fold, A domain"/>
    <property type="match status" value="1"/>
</dbReference>
<dbReference type="Gene3D" id="3.30.470.20">
    <property type="entry name" value="ATP-grasp fold, B domain"/>
    <property type="match status" value="1"/>
</dbReference>
<dbReference type="Gene3D" id="3.40.50.261">
    <property type="entry name" value="Succinyl-CoA synthetase domains"/>
    <property type="match status" value="1"/>
</dbReference>
<dbReference type="HAMAP" id="MF_00558">
    <property type="entry name" value="Succ_CoA_beta"/>
    <property type="match status" value="1"/>
</dbReference>
<dbReference type="InterPro" id="IPR011761">
    <property type="entry name" value="ATP-grasp"/>
</dbReference>
<dbReference type="InterPro" id="IPR013650">
    <property type="entry name" value="ATP-grasp_succ-CoA_synth-type"/>
</dbReference>
<dbReference type="InterPro" id="IPR013815">
    <property type="entry name" value="ATP_grasp_subdomain_1"/>
</dbReference>
<dbReference type="InterPro" id="IPR005811">
    <property type="entry name" value="SUCC_ACL_C"/>
</dbReference>
<dbReference type="InterPro" id="IPR005809">
    <property type="entry name" value="Succ_CoA_ligase-like_bsu"/>
</dbReference>
<dbReference type="InterPro" id="IPR016102">
    <property type="entry name" value="Succinyl-CoA_synth-like"/>
</dbReference>
<dbReference type="NCBIfam" id="NF001913">
    <property type="entry name" value="PRK00696.1"/>
    <property type="match status" value="1"/>
</dbReference>
<dbReference type="NCBIfam" id="TIGR01016">
    <property type="entry name" value="sucCoAbeta"/>
    <property type="match status" value="1"/>
</dbReference>
<dbReference type="PANTHER" id="PTHR11815:SF10">
    <property type="entry name" value="SUCCINATE--COA LIGASE [GDP-FORMING] SUBUNIT BETA, MITOCHONDRIAL"/>
    <property type="match status" value="1"/>
</dbReference>
<dbReference type="PANTHER" id="PTHR11815">
    <property type="entry name" value="SUCCINYL-COA SYNTHETASE BETA CHAIN"/>
    <property type="match status" value="1"/>
</dbReference>
<dbReference type="Pfam" id="PF08442">
    <property type="entry name" value="ATP-grasp_2"/>
    <property type="match status" value="1"/>
</dbReference>
<dbReference type="Pfam" id="PF00549">
    <property type="entry name" value="Ligase_CoA"/>
    <property type="match status" value="1"/>
</dbReference>
<dbReference type="PIRSF" id="PIRSF001554">
    <property type="entry name" value="SucCS_beta"/>
    <property type="match status" value="1"/>
</dbReference>
<dbReference type="SUPFAM" id="SSF56059">
    <property type="entry name" value="Glutathione synthetase ATP-binding domain-like"/>
    <property type="match status" value="1"/>
</dbReference>
<dbReference type="SUPFAM" id="SSF52210">
    <property type="entry name" value="Succinyl-CoA synthetase domains"/>
    <property type="match status" value="1"/>
</dbReference>
<dbReference type="PROSITE" id="PS50975">
    <property type="entry name" value="ATP_GRASP"/>
    <property type="match status" value="1"/>
</dbReference>
<evidence type="ECO:0000255" key="1">
    <source>
        <dbReference type="HAMAP-Rule" id="MF_00558"/>
    </source>
</evidence>
<reference key="1">
    <citation type="journal article" date="2004" name="Nucleic Acids Res.">
        <title>The genome sequence of Bacillus cereus ATCC 10987 reveals metabolic adaptations and a large plasmid related to Bacillus anthracis pXO1.</title>
        <authorList>
            <person name="Rasko D.A."/>
            <person name="Ravel J."/>
            <person name="Oekstad O.A."/>
            <person name="Helgason E."/>
            <person name="Cer R.Z."/>
            <person name="Jiang L."/>
            <person name="Shores K.A."/>
            <person name="Fouts D.E."/>
            <person name="Tourasse N.J."/>
            <person name="Angiuoli S.V."/>
            <person name="Kolonay J.F."/>
            <person name="Nelson W.C."/>
            <person name="Kolstoe A.-B."/>
            <person name="Fraser C.M."/>
            <person name="Read T.D."/>
        </authorList>
    </citation>
    <scope>NUCLEOTIDE SEQUENCE [LARGE SCALE GENOMIC DNA]</scope>
    <source>
        <strain>ATCC 10987 / NRS 248</strain>
    </source>
</reference>
<proteinExistence type="inferred from homology"/>
<keyword id="KW-0067">ATP-binding</keyword>
<keyword id="KW-0436">Ligase</keyword>
<keyword id="KW-0460">Magnesium</keyword>
<keyword id="KW-0479">Metal-binding</keyword>
<keyword id="KW-0547">Nucleotide-binding</keyword>
<keyword id="KW-0816">Tricarboxylic acid cycle</keyword>
<protein>
    <recommendedName>
        <fullName evidence="1">Succinate--CoA ligase [ADP-forming] subunit beta</fullName>
        <ecNumber evidence="1">6.2.1.5</ecNumber>
    </recommendedName>
    <alternativeName>
        <fullName evidence="1">Succinyl-CoA synthetase subunit beta</fullName>
        <shortName evidence="1">SCS-beta</shortName>
    </alternativeName>
</protein>
<feature type="chain" id="PRO_1000082007" description="Succinate--CoA ligase [ADP-forming] subunit beta">
    <location>
        <begin position="1"/>
        <end position="386"/>
    </location>
</feature>
<feature type="domain" description="ATP-grasp" evidence="1">
    <location>
        <begin position="9"/>
        <end position="244"/>
    </location>
</feature>
<feature type="binding site" evidence="1">
    <location>
        <position position="46"/>
    </location>
    <ligand>
        <name>ATP</name>
        <dbReference type="ChEBI" id="CHEBI:30616"/>
    </ligand>
</feature>
<feature type="binding site" evidence="1">
    <location>
        <begin position="53"/>
        <end position="55"/>
    </location>
    <ligand>
        <name>ATP</name>
        <dbReference type="ChEBI" id="CHEBI:30616"/>
    </ligand>
</feature>
<feature type="binding site" evidence="1">
    <location>
        <position position="99"/>
    </location>
    <ligand>
        <name>ATP</name>
        <dbReference type="ChEBI" id="CHEBI:30616"/>
    </ligand>
</feature>
<feature type="binding site" evidence="1">
    <location>
        <position position="102"/>
    </location>
    <ligand>
        <name>ATP</name>
        <dbReference type="ChEBI" id="CHEBI:30616"/>
    </ligand>
</feature>
<feature type="binding site" evidence="1">
    <location>
        <position position="107"/>
    </location>
    <ligand>
        <name>ATP</name>
        <dbReference type="ChEBI" id="CHEBI:30616"/>
    </ligand>
</feature>
<feature type="binding site" evidence="1">
    <location>
        <position position="199"/>
    </location>
    <ligand>
        <name>Mg(2+)</name>
        <dbReference type="ChEBI" id="CHEBI:18420"/>
    </ligand>
</feature>
<feature type="binding site" evidence="1">
    <location>
        <position position="213"/>
    </location>
    <ligand>
        <name>Mg(2+)</name>
        <dbReference type="ChEBI" id="CHEBI:18420"/>
    </ligand>
</feature>
<feature type="binding site" evidence="1">
    <location>
        <position position="264"/>
    </location>
    <ligand>
        <name>substrate</name>
        <note>ligand shared with subunit alpha</note>
    </ligand>
</feature>
<feature type="binding site" evidence="1">
    <location>
        <begin position="321"/>
        <end position="323"/>
    </location>
    <ligand>
        <name>substrate</name>
        <note>ligand shared with subunit alpha</note>
    </ligand>
</feature>
<name>SUCC_BACC1</name>
<accession>Q732N4</accession>
<organism>
    <name type="scientific">Bacillus cereus (strain ATCC 10987 / NRS 248)</name>
    <dbReference type="NCBI Taxonomy" id="222523"/>
    <lineage>
        <taxon>Bacteria</taxon>
        <taxon>Bacillati</taxon>
        <taxon>Bacillota</taxon>
        <taxon>Bacilli</taxon>
        <taxon>Bacillales</taxon>
        <taxon>Bacillaceae</taxon>
        <taxon>Bacillus</taxon>
        <taxon>Bacillus cereus group</taxon>
    </lineage>
</organism>
<gene>
    <name evidence="1" type="primary">sucC</name>
    <name type="ordered locus">BCE_3878</name>
</gene>